<proteinExistence type="inferred from homology"/>
<keyword id="KW-0963">Cytoplasm</keyword>
<keyword id="KW-0210">Decarboxylase</keyword>
<keyword id="KW-0456">Lyase</keyword>
<keyword id="KW-0627">Porphyrin biosynthesis</keyword>
<keyword id="KW-1185">Reference proteome</keyword>
<protein>
    <recommendedName>
        <fullName evidence="1">Uroporphyrinogen decarboxylase</fullName>
        <shortName evidence="1">UPD</shortName>
        <shortName evidence="1">URO-D</shortName>
        <ecNumber evidence="1">4.1.1.37</ecNumber>
    </recommendedName>
</protein>
<sequence length="351" mass="39333">MLKNDLFLRALKRQPCSRTPIWVMRQAGRYLPEYRAVREKTDFLTLCKTPELAAEVTIQPVDLMGVDAAIIFSDILVVNEAMGMDVEIIESKGIRLSPAIRSQVDIDRLIIPDINEKLGYVMDAIRLTKKELDNRVPLIGFSGAAWTLFTYAVEGGGSKNYAFAKKMMYREPKMAHMLLSKISSVITEYVLMQIEAGADAIQIFDSWASALSEDDYREFALPYIKENVQAIKTKYPDTPVIVFSKDCNTILSEIADTGCDAMGLGWNMDIAKARKELNDRVCIQGNMDPTVLYGTPDKIRSEAAKILKQFGQHTATSGHVFNLGHGILPDVDPANLKLLVEFVKEESVKYH</sequence>
<comment type="function">
    <text evidence="1">Catalyzes the decarboxylation of four acetate groups of uroporphyrinogen-III to yield coproporphyrinogen-III.</text>
</comment>
<comment type="catalytic activity">
    <reaction evidence="1">
        <text>uroporphyrinogen III + 4 H(+) = coproporphyrinogen III + 4 CO2</text>
        <dbReference type="Rhea" id="RHEA:19865"/>
        <dbReference type="ChEBI" id="CHEBI:15378"/>
        <dbReference type="ChEBI" id="CHEBI:16526"/>
        <dbReference type="ChEBI" id="CHEBI:57308"/>
        <dbReference type="ChEBI" id="CHEBI:57309"/>
        <dbReference type="EC" id="4.1.1.37"/>
    </reaction>
</comment>
<comment type="pathway">
    <text evidence="1">Porphyrin-containing compound metabolism; protoporphyrin-IX biosynthesis; coproporphyrinogen-III from 5-aminolevulinate: step 4/4.</text>
</comment>
<comment type="subunit">
    <text evidence="1">Homodimer.</text>
</comment>
<comment type="subcellular location">
    <subcellularLocation>
        <location evidence="1">Cytoplasm</location>
    </subcellularLocation>
</comment>
<comment type="similarity">
    <text evidence="1">Belongs to the uroporphyrinogen decarboxylase family.</text>
</comment>
<name>DCUP_CHLPD</name>
<reference key="1">
    <citation type="submission" date="2006-12" db="EMBL/GenBank/DDBJ databases">
        <title>Complete sequence of Chlorobium phaeobacteroides DSM 266.</title>
        <authorList>
            <consortium name="US DOE Joint Genome Institute"/>
            <person name="Copeland A."/>
            <person name="Lucas S."/>
            <person name="Lapidus A."/>
            <person name="Barry K."/>
            <person name="Detter J.C."/>
            <person name="Glavina del Rio T."/>
            <person name="Hammon N."/>
            <person name="Israni S."/>
            <person name="Pitluck S."/>
            <person name="Goltsman E."/>
            <person name="Schmutz J."/>
            <person name="Larimer F."/>
            <person name="Land M."/>
            <person name="Hauser L."/>
            <person name="Mikhailova N."/>
            <person name="Li T."/>
            <person name="Overmann J."/>
            <person name="Bryant D.A."/>
            <person name="Richardson P."/>
        </authorList>
    </citation>
    <scope>NUCLEOTIDE SEQUENCE [LARGE SCALE GENOMIC DNA]</scope>
    <source>
        <strain>DSM 266 / SMG 266 / 2430</strain>
    </source>
</reference>
<evidence type="ECO:0000255" key="1">
    <source>
        <dbReference type="HAMAP-Rule" id="MF_00218"/>
    </source>
</evidence>
<accession>A1BCW4</accession>
<feature type="chain" id="PRO_1000023896" description="Uroporphyrinogen decarboxylase">
    <location>
        <begin position="1"/>
        <end position="351"/>
    </location>
</feature>
<feature type="binding site" evidence="1">
    <location>
        <begin position="25"/>
        <end position="29"/>
    </location>
    <ligand>
        <name>substrate</name>
    </ligand>
</feature>
<feature type="binding site" evidence="1">
    <location>
        <position position="74"/>
    </location>
    <ligand>
        <name>substrate</name>
    </ligand>
</feature>
<feature type="binding site" evidence="1">
    <location>
        <position position="151"/>
    </location>
    <ligand>
        <name>substrate</name>
    </ligand>
</feature>
<feature type="binding site" evidence="1">
    <location>
        <position position="206"/>
    </location>
    <ligand>
        <name>substrate</name>
    </ligand>
</feature>
<feature type="binding site" evidence="1">
    <location>
        <position position="325"/>
    </location>
    <ligand>
        <name>substrate</name>
    </ligand>
</feature>
<feature type="site" description="Transition state stabilizer" evidence="1">
    <location>
        <position position="74"/>
    </location>
</feature>
<organism>
    <name type="scientific">Chlorobium phaeobacteroides (strain DSM 266 / SMG 266 / 2430)</name>
    <dbReference type="NCBI Taxonomy" id="290317"/>
    <lineage>
        <taxon>Bacteria</taxon>
        <taxon>Pseudomonadati</taxon>
        <taxon>Chlorobiota</taxon>
        <taxon>Chlorobiia</taxon>
        <taxon>Chlorobiales</taxon>
        <taxon>Chlorobiaceae</taxon>
        <taxon>Chlorobium/Pelodictyon group</taxon>
        <taxon>Chlorobium</taxon>
    </lineage>
</organism>
<dbReference type="EC" id="4.1.1.37" evidence="1"/>
<dbReference type="EMBL" id="CP000492">
    <property type="protein sequence ID" value="ABL64241.1"/>
    <property type="molecule type" value="Genomic_DNA"/>
</dbReference>
<dbReference type="RefSeq" id="WP_011744081.1">
    <property type="nucleotide sequence ID" value="NC_008639.1"/>
</dbReference>
<dbReference type="SMR" id="A1BCW4"/>
<dbReference type="STRING" id="290317.Cpha266_0174"/>
<dbReference type="KEGG" id="cph:Cpha266_0174"/>
<dbReference type="eggNOG" id="COG0407">
    <property type="taxonomic scope" value="Bacteria"/>
</dbReference>
<dbReference type="HOGENOM" id="CLU_040933_0_0_10"/>
<dbReference type="OrthoDB" id="9806656at2"/>
<dbReference type="UniPathway" id="UPA00251">
    <property type="reaction ID" value="UER00321"/>
</dbReference>
<dbReference type="Proteomes" id="UP000008701">
    <property type="component" value="Chromosome"/>
</dbReference>
<dbReference type="GO" id="GO:0005829">
    <property type="term" value="C:cytosol"/>
    <property type="evidence" value="ECO:0007669"/>
    <property type="project" value="TreeGrafter"/>
</dbReference>
<dbReference type="GO" id="GO:0004853">
    <property type="term" value="F:uroporphyrinogen decarboxylase activity"/>
    <property type="evidence" value="ECO:0007669"/>
    <property type="project" value="UniProtKB-UniRule"/>
</dbReference>
<dbReference type="GO" id="GO:0006782">
    <property type="term" value="P:protoporphyrinogen IX biosynthetic process"/>
    <property type="evidence" value="ECO:0007669"/>
    <property type="project" value="UniProtKB-UniRule"/>
</dbReference>
<dbReference type="CDD" id="cd00717">
    <property type="entry name" value="URO-D"/>
    <property type="match status" value="1"/>
</dbReference>
<dbReference type="FunFam" id="3.20.20.210:FF:000001">
    <property type="entry name" value="Uroporphyrinogen decarboxylase"/>
    <property type="match status" value="1"/>
</dbReference>
<dbReference type="Gene3D" id="3.20.20.210">
    <property type="match status" value="1"/>
</dbReference>
<dbReference type="HAMAP" id="MF_00218">
    <property type="entry name" value="URO_D"/>
    <property type="match status" value="1"/>
</dbReference>
<dbReference type="InterPro" id="IPR038071">
    <property type="entry name" value="UROD/MetE-like_sf"/>
</dbReference>
<dbReference type="InterPro" id="IPR006361">
    <property type="entry name" value="Uroporphyrinogen_deCO2ase_HemE"/>
</dbReference>
<dbReference type="InterPro" id="IPR000257">
    <property type="entry name" value="Uroporphyrinogen_deCOase"/>
</dbReference>
<dbReference type="NCBIfam" id="TIGR01464">
    <property type="entry name" value="hemE"/>
    <property type="match status" value="1"/>
</dbReference>
<dbReference type="PANTHER" id="PTHR21091">
    <property type="entry name" value="METHYLTETRAHYDROFOLATE:HOMOCYSTEINE METHYLTRANSFERASE RELATED"/>
    <property type="match status" value="1"/>
</dbReference>
<dbReference type="PANTHER" id="PTHR21091:SF169">
    <property type="entry name" value="UROPORPHYRINOGEN DECARBOXYLASE"/>
    <property type="match status" value="1"/>
</dbReference>
<dbReference type="Pfam" id="PF01208">
    <property type="entry name" value="URO-D"/>
    <property type="match status" value="1"/>
</dbReference>
<dbReference type="SUPFAM" id="SSF51726">
    <property type="entry name" value="UROD/MetE-like"/>
    <property type="match status" value="1"/>
</dbReference>
<dbReference type="PROSITE" id="PS00906">
    <property type="entry name" value="UROD_1"/>
    <property type="match status" value="1"/>
</dbReference>
<dbReference type="PROSITE" id="PS00907">
    <property type="entry name" value="UROD_2"/>
    <property type="match status" value="1"/>
</dbReference>
<gene>
    <name evidence="1" type="primary">hemE</name>
    <name type="ordered locus">Cpha266_0174</name>
</gene>